<name>KIBRA_DROWI</name>
<proteinExistence type="inferred from homology"/>
<sequence>MSNLPQTQAHHLQPHPQHPQHLLHHHQQQQQQQQQQQQQQHGHHNHSDFPLPDGWDIAKDFDGKTYYIDHINKKTTWLDPRDRYTKPQSFEDCVGDELPVGWEEAYEPNIGRYYINHIAQSTQLEDPRQEWKSVQEQMLSDYLSAAQDQLENKREMYDVKQQRLLLAQEEYNHLNKLAASRSSLCSSSSSMSRHDPELLRADLMLARERVRQLKQELNHITNDISHTERGMNTLYSVGEKINARENGCYDIAEVQAIREEMLKVHKSLVSGEKVREELMRSLVQIKNELSRQQMNEENADLLNAASPFDRVCVASQTDLCGAGESLNGGARFAEMAKTKLQYAEWRKHIKKLQQQLADHVERIEPGQLESDKDRILLIQEKEKLLNDLNSISLKSRSLEETQVIQQTRQKLEDDLKEAYEANNTCIANRLRFHEEKQHLLDKLQEALKSTKLLEERLKSFSSESTFSISSGSSLGSLSTASSKSALSFTDIYVDHFAVDSPIDVVDLQRRSQRFFQQQQQQQQHRLPPVHGHPVLQQQQSSEVSLSPRSSLSMETPPASPMKYNAGADQPQLPPAAASLAPPKEEPTYANALPAPPAYTAPPPAPIAAVRAPHAYDLDSTVLDCMILEAKLKKLNLNSPLNLAAPLSPISEKPSLLDLPQEMLSRSSSTSNTRSVSAAVSNESVAGDSGVFEASRAHLPRRELAQVQIGLKYLKQEGVLVVSLERANNLLALWTASSDNSQVYLRAALLPNSLTSIRTKALGDFQKPVFNDTFAVPISLDKLLTKSLQVTVVSMTGQKEEIIGTVQISMAEFNPDDSTLKWYNVLSSKFMPSFESLDIPSTSAAAAAAAVAANNTNAMNSNSNNNREESSDESTITSSQTSTLTRNQAPPLELQAQIAEELPEHVRLNEQECSDDDDDDDDDDDEEEEDEQQLIGTEELTNSSGMLDTYLKIMKQQYADKETNTECAFPPEKSRAQSQLLDDRPVKRSQTFTPSAAVSKSRYNCRLNRSDSDSAMHFGVTPHTFHRGAAERRSLRFHTKAPKTATKLHHTHIPRTSLDLELDLQAQHSKLFFLNDQIAKLQNLKDVLQKGCESKDPLIAAWAIENEEFQRLVARADPAKCPEERQLQKLLMKTAKEIHKLRKTKVPKGCPDLVSFKEKITFFTRKGLSVPELPSEFILADGDAIEEEEEEDDNAAETAIAINTALVASSNRNKNLSEHHHRAACNSGAVPKRSATPTPITAATTADASASSAPATAAVAPTTAATVSDDKPDQQRFDYVVDRNYGVEV</sequence>
<evidence type="ECO:0000250" key="1"/>
<evidence type="ECO:0000255" key="2"/>
<evidence type="ECO:0000255" key="3">
    <source>
        <dbReference type="PROSITE-ProRule" id="PRU00041"/>
    </source>
</evidence>
<evidence type="ECO:0000255" key="4">
    <source>
        <dbReference type="PROSITE-ProRule" id="PRU00224"/>
    </source>
</evidence>
<evidence type="ECO:0000256" key="5">
    <source>
        <dbReference type="SAM" id="MobiDB-lite"/>
    </source>
</evidence>
<evidence type="ECO:0000305" key="6"/>
<organism>
    <name type="scientific">Drosophila willistoni</name>
    <name type="common">Fruit fly</name>
    <dbReference type="NCBI Taxonomy" id="7260"/>
    <lineage>
        <taxon>Eukaryota</taxon>
        <taxon>Metazoa</taxon>
        <taxon>Ecdysozoa</taxon>
        <taxon>Arthropoda</taxon>
        <taxon>Hexapoda</taxon>
        <taxon>Insecta</taxon>
        <taxon>Pterygota</taxon>
        <taxon>Neoptera</taxon>
        <taxon>Endopterygota</taxon>
        <taxon>Diptera</taxon>
        <taxon>Brachycera</taxon>
        <taxon>Muscomorpha</taxon>
        <taxon>Ephydroidea</taxon>
        <taxon>Drosophilidae</taxon>
        <taxon>Drosophila</taxon>
        <taxon>Sophophora</taxon>
    </lineage>
</organism>
<dbReference type="EMBL" id="CH964232">
    <property type="protein sequence ID" value="EDW80747.1"/>
    <property type="molecule type" value="Genomic_DNA"/>
</dbReference>
<dbReference type="RefSeq" id="XP_002069761.2">
    <property type="nucleotide sequence ID" value="XM_002069725.2"/>
</dbReference>
<dbReference type="SMR" id="B4NAD3"/>
<dbReference type="STRING" id="7260.B4NAD3"/>
<dbReference type="EnsemblMetazoa" id="XM_023178352.2">
    <property type="protein sequence ID" value="XP_023034120.1"/>
    <property type="gene ID" value="LOC6647222"/>
</dbReference>
<dbReference type="eggNOG" id="KOG0940">
    <property type="taxonomic scope" value="Eukaryota"/>
</dbReference>
<dbReference type="eggNOG" id="KOG3209">
    <property type="taxonomic scope" value="Eukaryota"/>
</dbReference>
<dbReference type="HOGENOM" id="CLU_005420_1_0_1"/>
<dbReference type="OMA" id="QVTVVSM"/>
<dbReference type="OrthoDB" id="2020426at2759"/>
<dbReference type="PhylomeDB" id="B4NAD3"/>
<dbReference type="ChiTaRS" id="kibra">
    <property type="organism name" value="fly"/>
</dbReference>
<dbReference type="Proteomes" id="UP000007798">
    <property type="component" value="Unassembled WGS sequence"/>
</dbReference>
<dbReference type="GO" id="GO:0106037">
    <property type="term" value="C:apicomedial cortex"/>
    <property type="evidence" value="ECO:0007669"/>
    <property type="project" value="EnsemblMetazoa"/>
</dbReference>
<dbReference type="GO" id="GO:0005911">
    <property type="term" value="C:cell-cell junction"/>
    <property type="evidence" value="ECO:0007669"/>
    <property type="project" value="EnsemblMetazoa"/>
</dbReference>
<dbReference type="GO" id="GO:0098592">
    <property type="term" value="C:cytoplasmic side of apical plasma membrane"/>
    <property type="evidence" value="ECO:0007669"/>
    <property type="project" value="EnsemblMetazoa"/>
</dbReference>
<dbReference type="GO" id="GO:0036375">
    <property type="term" value="C:Kibra-Ex-Mer complex"/>
    <property type="evidence" value="ECO:0007669"/>
    <property type="project" value="EnsemblMetazoa"/>
</dbReference>
<dbReference type="GO" id="GO:0019900">
    <property type="term" value="F:kinase binding"/>
    <property type="evidence" value="ECO:0007669"/>
    <property type="project" value="TreeGrafter"/>
</dbReference>
<dbReference type="GO" id="GO:0060090">
    <property type="term" value="F:molecular adaptor activity"/>
    <property type="evidence" value="ECO:0007669"/>
    <property type="project" value="TreeGrafter"/>
</dbReference>
<dbReference type="GO" id="GO:0007298">
    <property type="term" value="P:border follicle cell migration"/>
    <property type="evidence" value="ECO:0007669"/>
    <property type="project" value="EnsemblMetazoa"/>
</dbReference>
<dbReference type="GO" id="GO:0060253">
    <property type="term" value="P:negative regulation of glial cell proliferation"/>
    <property type="evidence" value="ECO:0007669"/>
    <property type="project" value="EnsemblMetazoa"/>
</dbReference>
<dbReference type="GO" id="GO:0046621">
    <property type="term" value="P:negative regulation of organ growth"/>
    <property type="evidence" value="ECO:0007669"/>
    <property type="project" value="EnsemblMetazoa"/>
</dbReference>
<dbReference type="GO" id="GO:0043065">
    <property type="term" value="P:positive regulation of apoptotic process"/>
    <property type="evidence" value="ECO:0007669"/>
    <property type="project" value="EnsemblMetazoa"/>
</dbReference>
<dbReference type="GO" id="GO:0035332">
    <property type="term" value="P:positive regulation of hippo signaling"/>
    <property type="evidence" value="ECO:0000250"/>
    <property type="project" value="UniProtKB"/>
</dbReference>
<dbReference type="GO" id="GO:0045463">
    <property type="term" value="P:R8 cell development"/>
    <property type="evidence" value="ECO:0007669"/>
    <property type="project" value="EnsemblMetazoa"/>
</dbReference>
<dbReference type="GO" id="GO:0045464">
    <property type="term" value="P:R8 cell fate specification"/>
    <property type="evidence" value="ECO:0007669"/>
    <property type="project" value="EnsemblMetazoa"/>
</dbReference>
<dbReference type="GO" id="GO:0006355">
    <property type="term" value="P:regulation of DNA-templated transcription"/>
    <property type="evidence" value="ECO:0007669"/>
    <property type="project" value="EnsemblMetazoa"/>
</dbReference>
<dbReference type="CDD" id="cd08680">
    <property type="entry name" value="C2_Kibra"/>
    <property type="match status" value="1"/>
</dbReference>
<dbReference type="CDD" id="cd00201">
    <property type="entry name" value="WW"/>
    <property type="match status" value="2"/>
</dbReference>
<dbReference type="FunFam" id="2.60.40.150:FF:000228">
    <property type="entry name" value="Blast:Protein kibra"/>
    <property type="match status" value="1"/>
</dbReference>
<dbReference type="Gene3D" id="2.20.70.10">
    <property type="match status" value="2"/>
</dbReference>
<dbReference type="Gene3D" id="2.60.40.150">
    <property type="entry name" value="C2 domain"/>
    <property type="match status" value="1"/>
</dbReference>
<dbReference type="InterPro" id="IPR000008">
    <property type="entry name" value="C2_dom"/>
</dbReference>
<dbReference type="InterPro" id="IPR035892">
    <property type="entry name" value="C2_domain_sf"/>
</dbReference>
<dbReference type="InterPro" id="IPR037771">
    <property type="entry name" value="C2_WWC"/>
</dbReference>
<dbReference type="InterPro" id="IPR001202">
    <property type="entry name" value="WW_dom"/>
</dbReference>
<dbReference type="InterPro" id="IPR036020">
    <property type="entry name" value="WW_dom_sf"/>
</dbReference>
<dbReference type="InterPro" id="IPR051105">
    <property type="entry name" value="WWC/KIBRA_Hippo_Reg"/>
</dbReference>
<dbReference type="PANTHER" id="PTHR14791">
    <property type="entry name" value="BOMB/KIRA PROTEINS"/>
    <property type="match status" value="1"/>
</dbReference>
<dbReference type="PANTHER" id="PTHR14791:SF29">
    <property type="entry name" value="PROTEIN KIBRA"/>
    <property type="match status" value="1"/>
</dbReference>
<dbReference type="Pfam" id="PF00168">
    <property type="entry name" value="C2"/>
    <property type="match status" value="1"/>
</dbReference>
<dbReference type="Pfam" id="PF00397">
    <property type="entry name" value="WW"/>
    <property type="match status" value="1"/>
</dbReference>
<dbReference type="SMART" id="SM00239">
    <property type="entry name" value="C2"/>
    <property type="match status" value="1"/>
</dbReference>
<dbReference type="SMART" id="SM00456">
    <property type="entry name" value="WW"/>
    <property type="match status" value="2"/>
</dbReference>
<dbReference type="SUPFAM" id="SSF49562">
    <property type="entry name" value="C2 domain (Calcium/lipid-binding domain, CaLB)"/>
    <property type="match status" value="1"/>
</dbReference>
<dbReference type="SUPFAM" id="SSF51045">
    <property type="entry name" value="WW domain"/>
    <property type="match status" value="2"/>
</dbReference>
<dbReference type="PROSITE" id="PS50004">
    <property type="entry name" value="C2"/>
    <property type="match status" value="1"/>
</dbReference>
<dbReference type="PROSITE" id="PS01159">
    <property type="entry name" value="WW_DOMAIN_1"/>
    <property type="match status" value="1"/>
</dbReference>
<dbReference type="PROSITE" id="PS50020">
    <property type="entry name" value="WW_DOMAIN_2"/>
    <property type="match status" value="2"/>
</dbReference>
<feature type="chain" id="PRO_0000392975" description="Protein kibra">
    <location>
        <begin position="1"/>
        <end position="1288"/>
    </location>
</feature>
<feature type="domain" description="WW 1" evidence="4">
    <location>
        <begin position="49"/>
        <end position="82"/>
    </location>
</feature>
<feature type="domain" description="WW 2" evidence="4">
    <location>
        <begin position="96"/>
        <end position="129"/>
    </location>
</feature>
<feature type="domain" description="C2" evidence="3">
    <location>
        <begin position="702"/>
        <end position="822"/>
    </location>
</feature>
<feature type="region of interest" description="Disordered" evidence="5">
    <location>
        <begin position="1"/>
        <end position="55"/>
    </location>
</feature>
<feature type="region of interest" description="Disordered" evidence="5">
    <location>
        <begin position="515"/>
        <end position="584"/>
    </location>
</feature>
<feature type="region of interest" description="Disordered" evidence="5">
    <location>
        <begin position="856"/>
        <end position="888"/>
    </location>
</feature>
<feature type="region of interest" description="Disordered" evidence="5">
    <location>
        <begin position="905"/>
        <end position="942"/>
    </location>
</feature>
<feature type="region of interest" description="Disordered" evidence="5">
    <location>
        <begin position="964"/>
        <end position="994"/>
    </location>
</feature>
<feature type="region of interest" description="Disordered" evidence="5">
    <location>
        <begin position="1213"/>
        <end position="1277"/>
    </location>
</feature>
<feature type="coiled-coil region" evidence="2">
    <location>
        <begin position="143"/>
        <end position="170"/>
    </location>
</feature>
<feature type="coiled-coil region" evidence="2">
    <location>
        <begin position="197"/>
        <end position="232"/>
    </location>
</feature>
<feature type="coiled-coil region" evidence="2">
    <location>
        <begin position="333"/>
        <end position="461"/>
    </location>
</feature>
<feature type="compositionally biased region" description="Low complexity" evidence="5">
    <location>
        <begin position="1"/>
        <end position="15"/>
    </location>
</feature>
<feature type="compositionally biased region" description="Low complexity" evidence="5">
    <location>
        <begin position="28"/>
        <end position="40"/>
    </location>
</feature>
<feature type="compositionally biased region" description="Low complexity" evidence="5">
    <location>
        <begin position="534"/>
        <end position="552"/>
    </location>
</feature>
<feature type="compositionally biased region" description="Low complexity" evidence="5">
    <location>
        <begin position="565"/>
        <end position="581"/>
    </location>
</feature>
<feature type="compositionally biased region" description="Low complexity" evidence="5">
    <location>
        <begin position="872"/>
        <end position="884"/>
    </location>
</feature>
<feature type="compositionally biased region" description="Acidic residues" evidence="5">
    <location>
        <begin position="911"/>
        <end position="931"/>
    </location>
</feature>
<feature type="compositionally biased region" description="Low complexity" evidence="5">
    <location>
        <begin position="1233"/>
        <end position="1265"/>
    </location>
</feature>
<feature type="compositionally biased region" description="Basic and acidic residues" evidence="5">
    <location>
        <begin position="1267"/>
        <end position="1277"/>
    </location>
</feature>
<accession>B4NAD3</accession>
<gene>
    <name type="primary">Kibra</name>
    <name type="ORF">GK11691</name>
</gene>
<protein>
    <recommendedName>
        <fullName>Protein kibra</fullName>
    </recommendedName>
</protein>
<comment type="function">
    <text evidence="1">Regulator of the Hippo/SWH (Sav/Wts/Hpo) signaling pathway, a signaling pathway that plays a pivotal role in organ size control and tumor suppression by restricting proliferation and promoting apoptosis. The core of this pathway is composed of a kinase cascade wherein Hippo (Hpo), in complex with its regulatory protein Salvador (Sav), phosphorylates and activates Warts (Wts) in complex with its regulatory protein Mats, which in turn phosphorylates and inactivates the Yorkie (Yki) oncoprotein. Kibra acts synergistically along with Ex and Mer to regulate the Hippo signaling pathway (By similarity).</text>
</comment>
<comment type="subunit">
    <text evidence="1">Forms a complex with Mer and Ex. Interacts (via domain WW 1) with Ex (via RXPPXY motif). Interacts with Mer, Sav, Hpo and Wts (By similarity).</text>
</comment>
<comment type="subcellular location">
    <subcellularLocation>
        <location evidence="1">Cytoplasm</location>
    </subcellularLocation>
    <subcellularLocation>
        <location evidence="1">Apical cell membrane</location>
    </subcellularLocation>
    <text evidence="1">Localizes at the apical cortex of epithelial cells and cytoplasmic, punctate.</text>
</comment>
<comment type="similarity">
    <text evidence="6">Belongs to the WWC family. KIBRA subfamily.</text>
</comment>
<keyword id="KW-1003">Cell membrane</keyword>
<keyword id="KW-0175">Coiled coil</keyword>
<keyword id="KW-0963">Cytoplasm</keyword>
<keyword id="KW-0472">Membrane</keyword>
<keyword id="KW-0597">Phosphoprotein</keyword>
<keyword id="KW-1185">Reference proteome</keyword>
<keyword id="KW-0677">Repeat</keyword>
<keyword id="KW-0804">Transcription</keyword>
<keyword id="KW-0805">Transcription regulation</keyword>
<reference key="1">
    <citation type="journal article" date="2007" name="Nature">
        <title>Evolution of genes and genomes on the Drosophila phylogeny.</title>
        <authorList>
            <consortium name="Drosophila 12 genomes consortium"/>
        </authorList>
    </citation>
    <scope>NUCLEOTIDE SEQUENCE [LARGE SCALE GENOMIC DNA]</scope>
    <source>
        <strain>Tucson 14030-0811.24</strain>
    </source>
</reference>